<accession>B6HVR6</accession>
<name>NIT2_PENRW</name>
<sequence>MTAPVERRVRVAAIQAEPVWNDLQGGVNKVISLLGDVGKEGANVVGFPEVFIPGYPWSIFTATPLDNAPFMEEYFHNSLAVDSDEMRRIQAAVKENGTFCVLGFSERYQGSLYISQVFINTDGQIVHHRRKTKPTHVERAYWGTGEGDSLKCVVDSPFGRIGGLNCWEHTQPLLRYYEYQQDVDIHVASWPVLWDRPESVGSRWPYFITGDMSSRLSQVMAFEGTCFVLVCTQVMSEENFDKNKVRDVEHIQGTGGGFSAIFGPGGEPIATMPSDKEGILYANVDVNDKLRAKQWLDVVGHYSRPDLLSLRVNTHPSKPVFFAEEPEK</sequence>
<protein>
    <recommendedName>
        <fullName evidence="3">Nitrilase</fullName>
        <ecNumber evidence="2">3.5.5.1</ecNumber>
    </recommendedName>
    <alternativeName>
        <fullName evidence="3">NitPc2</fullName>
    </alternativeName>
</protein>
<gene>
    <name type="ORF">Pc22g19330ma2m</name>
</gene>
<evidence type="ECO:0000255" key="1">
    <source>
        <dbReference type="PROSITE-ProRule" id="PRU00054"/>
    </source>
</evidence>
<evidence type="ECO:0000269" key="2">
    <source>
    </source>
</evidence>
<evidence type="ECO:0000303" key="3">
    <source>
    </source>
</evidence>
<evidence type="ECO:0000305" key="4"/>
<keyword id="KW-0378">Hydrolase</keyword>
<keyword id="KW-1185">Reference proteome</keyword>
<reference key="1">
    <citation type="journal article" date="2008" name="Nat. Biotechnol.">
        <title>Genome sequencing and analysis of the filamentous fungus Penicillium chrysogenum.</title>
        <authorList>
            <person name="van den Berg M.A."/>
            <person name="Albang R."/>
            <person name="Albermann K."/>
            <person name="Badger J.H."/>
            <person name="Daran J.-M."/>
            <person name="Driessen A.J.M."/>
            <person name="Garcia-Estrada C."/>
            <person name="Fedorova N.D."/>
            <person name="Harris D.M."/>
            <person name="Heijne W.H.M."/>
            <person name="Joardar V.S."/>
            <person name="Kiel J.A.K.W."/>
            <person name="Kovalchuk A."/>
            <person name="Martin J.F."/>
            <person name="Nierman W.C."/>
            <person name="Nijland J.G."/>
            <person name="Pronk J.T."/>
            <person name="Roubos J.A."/>
            <person name="van der Klei I.J."/>
            <person name="van Peij N.N.M.E."/>
            <person name="Veenhuis M."/>
            <person name="von Doehren H."/>
            <person name="Wagner C."/>
            <person name="Wortman J.R."/>
            <person name="Bovenberg R.A.L."/>
        </authorList>
    </citation>
    <scope>NUCLEOTIDE SEQUENCE [LARGE SCALE GENOMIC DNA]</scope>
    <source>
        <strain>ATCC 28089 / DSM 1075 / NRRL 1951 / Wisconsin 54-1255</strain>
    </source>
</reference>
<reference key="2">
    <citation type="journal article" date="2013" name="Mol. Biotechnol.">
        <title>A comparative study of nitrilases identified by genome mining.</title>
        <authorList>
            <person name="Kaplan O."/>
            <person name="Vesela A.B."/>
            <person name="Petrickova A."/>
            <person name="Pasquarelli F."/>
            <person name="Picmanova M."/>
            <person name="Rinagelova A."/>
            <person name="Bhalla T.C."/>
            <person name="Patek M."/>
            <person name="Martinkova L."/>
        </authorList>
    </citation>
    <scope>FUNCTION</scope>
    <scope>CATALYTIC ACTIVITY</scope>
</reference>
<proteinExistence type="evidence at protein level"/>
<feature type="chain" id="PRO_0000432180" description="Nitrilase">
    <location>
        <begin position="1"/>
        <end position="328"/>
    </location>
</feature>
<feature type="domain" description="CN hydrolase" evidence="1">
    <location>
        <begin position="9"/>
        <end position="286"/>
    </location>
</feature>
<feature type="active site" description="Proton acceptor" evidence="1">
    <location>
        <position position="49"/>
    </location>
</feature>
<feature type="active site" evidence="1">
    <location>
        <position position="131"/>
    </location>
</feature>
<feature type="active site" description="Nucleophile" evidence="1">
    <location>
        <position position="166"/>
    </location>
</feature>
<dbReference type="EC" id="3.5.5.1" evidence="2"/>
<dbReference type="EMBL" id="AM920437">
    <property type="protein sequence ID" value="CAP99221.1"/>
    <property type="molecule type" value="Genomic_DNA"/>
</dbReference>
<dbReference type="RefSeq" id="XP_002565836.1">
    <property type="nucleotide sequence ID" value="XM_002565790.1"/>
</dbReference>
<dbReference type="SMR" id="B6HVR6"/>
<dbReference type="STRING" id="500485.B6HVR6"/>
<dbReference type="KEGG" id="pcs:N7525_004429"/>
<dbReference type="VEuPathDB" id="FungiDB:PCH_Pc22g19330"/>
<dbReference type="eggNOG" id="KOG0805">
    <property type="taxonomic scope" value="Eukaryota"/>
</dbReference>
<dbReference type="HOGENOM" id="CLU_030130_6_0_1"/>
<dbReference type="OMA" id="AFMDEYF"/>
<dbReference type="OrthoDB" id="10250282at2759"/>
<dbReference type="BioCyc" id="PCHR:PC22G19330-MONOMER"/>
<dbReference type="Proteomes" id="UP000000724">
    <property type="component" value="Contig Pc00c22"/>
</dbReference>
<dbReference type="GO" id="GO:0016836">
    <property type="term" value="F:hydro-lyase activity"/>
    <property type="evidence" value="ECO:0007669"/>
    <property type="project" value="UniProtKB-ARBA"/>
</dbReference>
<dbReference type="GO" id="GO:0000257">
    <property type="term" value="F:nitrilase activity"/>
    <property type="evidence" value="ECO:0007669"/>
    <property type="project" value="UniProtKB-EC"/>
</dbReference>
<dbReference type="CDD" id="cd07564">
    <property type="entry name" value="nitrilases_CHs"/>
    <property type="match status" value="1"/>
</dbReference>
<dbReference type="Gene3D" id="3.60.110.10">
    <property type="entry name" value="Carbon-nitrogen hydrolase"/>
    <property type="match status" value="1"/>
</dbReference>
<dbReference type="InterPro" id="IPR003010">
    <property type="entry name" value="C-N_Hydrolase"/>
</dbReference>
<dbReference type="InterPro" id="IPR036526">
    <property type="entry name" value="C-N_Hydrolase_sf"/>
</dbReference>
<dbReference type="InterPro" id="IPR000132">
    <property type="entry name" value="Nitrilase/CN_hydratase_CS"/>
</dbReference>
<dbReference type="InterPro" id="IPR044149">
    <property type="entry name" value="Nitrilases_CHs"/>
</dbReference>
<dbReference type="PANTHER" id="PTHR46044:SF14">
    <property type="entry name" value="ARYLACETONITRILASE"/>
    <property type="match status" value="1"/>
</dbReference>
<dbReference type="PANTHER" id="PTHR46044">
    <property type="entry name" value="NITRILASE"/>
    <property type="match status" value="1"/>
</dbReference>
<dbReference type="Pfam" id="PF00795">
    <property type="entry name" value="CN_hydrolase"/>
    <property type="match status" value="1"/>
</dbReference>
<dbReference type="SUPFAM" id="SSF56317">
    <property type="entry name" value="Carbon-nitrogen hydrolase"/>
    <property type="match status" value="1"/>
</dbReference>
<dbReference type="PROSITE" id="PS50263">
    <property type="entry name" value="CN_HYDROLASE"/>
    <property type="match status" value="1"/>
</dbReference>
<dbReference type="PROSITE" id="PS00920">
    <property type="entry name" value="NITRIL_CHT_1"/>
    <property type="match status" value="1"/>
</dbReference>
<dbReference type="PROSITE" id="PS00921">
    <property type="entry name" value="NITRIL_CHT_2"/>
    <property type="match status" value="1"/>
</dbReference>
<comment type="function">
    <text evidence="2">Nitrilase that hydrolyzes preferentially 4-cyanopyridine. Is also able to hydrolyze some aliphatic nitriles, such as (R,S)-mandelonitrile.</text>
</comment>
<comment type="catalytic activity">
    <reaction evidence="2">
        <text>a nitrile + 2 H2O = a carboxylate + NH4(+)</text>
        <dbReference type="Rhea" id="RHEA:21724"/>
        <dbReference type="ChEBI" id="CHEBI:15377"/>
        <dbReference type="ChEBI" id="CHEBI:18379"/>
        <dbReference type="ChEBI" id="CHEBI:28938"/>
        <dbReference type="ChEBI" id="CHEBI:29067"/>
        <dbReference type="EC" id="3.5.5.1"/>
    </reaction>
</comment>
<comment type="similarity">
    <text evidence="4">Belongs to the carbon-nitrogen hydrolase superfamily. Nitrilase family.</text>
</comment>
<organism>
    <name type="scientific">Penicillium rubens (strain ATCC 28089 / DSM 1075 / NRRL 1951 / Wisconsin 54-1255)</name>
    <name type="common">Penicillium chrysogenum</name>
    <dbReference type="NCBI Taxonomy" id="500485"/>
    <lineage>
        <taxon>Eukaryota</taxon>
        <taxon>Fungi</taxon>
        <taxon>Dikarya</taxon>
        <taxon>Ascomycota</taxon>
        <taxon>Pezizomycotina</taxon>
        <taxon>Eurotiomycetes</taxon>
        <taxon>Eurotiomycetidae</taxon>
        <taxon>Eurotiales</taxon>
        <taxon>Aspergillaceae</taxon>
        <taxon>Penicillium</taxon>
        <taxon>Penicillium chrysogenum species complex</taxon>
    </lineage>
</organism>